<organism>
    <name type="scientific">Arabidopsis thaliana</name>
    <name type="common">Mouse-ear cress</name>
    <dbReference type="NCBI Taxonomy" id="3702"/>
    <lineage>
        <taxon>Eukaryota</taxon>
        <taxon>Viridiplantae</taxon>
        <taxon>Streptophyta</taxon>
        <taxon>Embryophyta</taxon>
        <taxon>Tracheophyta</taxon>
        <taxon>Spermatophyta</taxon>
        <taxon>Magnoliopsida</taxon>
        <taxon>eudicotyledons</taxon>
        <taxon>Gunneridae</taxon>
        <taxon>Pentapetalae</taxon>
        <taxon>rosids</taxon>
        <taxon>malvids</taxon>
        <taxon>Brassicales</taxon>
        <taxon>Brassicaceae</taxon>
        <taxon>Camelineae</taxon>
        <taxon>Arabidopsis</taxon>
    </lineage>
</organism>
<sequence length="935" mass="105506">MEGNTNWKPNEQGGNRDAANNRIDWRSQHEPELRQKVLSKIVEKFKEKFHAHEEYKINDIASKFEENFYSIATDKTTTSQQWLQQNTQSNLCVICFAKSGPYNRSRFSKTDTCSVTAAATSSAKFVETTYSTAFSSIKLTKHSITDQKSVFDTTEQKRQEQEQLINQLTNLPTSRPNNRDQQGAFQVSSSQQNNNVTLHAMSQQKNNLQSMTRGQQVGQSQPMMSQQYRQQYPMQQDPQNRNLQKHLDFVQNNTNQFQAASSLRQTQNITDQQNQPQQLERANPSILIMNIIVASQDSTGKTVNVNAGNWQEETYQKIKKLKEMCLPVLSLMHQRVAEKLRETESLPPQPMQAQWIEKLKAGKLSMEHLMFFLNVHRSSVSEKHRDKFSQYEYHILKFTKSQTMVLRPTQQQQGQFPPSQTAMQTQSPQVHVSQSLYKEQRRSRLMPSSQNEASSLLQIRPKLDPRDENIIMASSGNVMLPSVKQNPRAVNTNISSVQSLQKQKRFHHRQMQQQQPQQGNHQHQMQTNEMNDVRMRERVNIKARLLEQQVSSSQRQVPKQESNVSSSQIQNHSSPQLVDQHILPATINKTGTPLNSSGSAFVAPAPSPVPGDSEMPISVESPVSGVDEINSTLDSSSKLGTQETPLLFVPPPEPITERPIDRLIKAFQAASPKSLAESVSEISSVISMVDMIGGSFPSSGGSRAGLGEDLSERTRNFTTHEETNLSKRMKRSINIVPPDMSSQIDSYEQLSSLESEVVSTTSSGLKVNNIAPGYALLQEIKETNGRLVETVVEICDEDSLGTIVTCTYAPVALSATFKDHYKSGKIIFYVSKCLMQAQIQPLRLLFPMDYPYSSPIVLEEISFDTSVHKYEDLSARTRSRFSLSMKEFSEPGFSKGIAQTWNDCARATMVEYAERHGGGTFSSKYGAWETVLRAS</sequence>
<name>MD15C_ARATH</name>
<proteinExistence type="inferred from homology"/>
<comment type="function">
    <text evidence="1">Component of the Mediator complex, a coactivator involved in the regulated transcription of nearly all RNA polymerase II-dependent genes. Mediator functions as a bridge to convey information from gene-specific regulatory proteins to the basal RNA polymerase II transcription machinery. The Mediator complex, having a compact conformation in its free form, is recruited to promoters by direct interactions with regulatory proteins and serves for the assembly of a functional preinitiation complex with RNA polymerase II and the general transcription factors (By similarity).</text>
</comment>
<comment type="subunit">
    <text evidence="3">Component of the Mediator complex.</text>
</comment>
<comment type="subcellular location">
    <subcellularLocation>
        <location evidence="3">Nucleus</location>
    </subcellularLocation>
</comment>
<comment type="alternative products">
    <event type="alternative splicing"/>
    <isoform>
        <id>Q9SHV7-1</id>
        <name>1</name>
        <sequence type="displayed"/>
    </isoform>
    <isoform>
        <id>Q9SHV7-2</id>
        <name>2</name>
        <sequence type="described" ref="VSP_044029 VSP_044030 VSP_044031 VSP_044032"/>
    </isoform>
</comment>
<comment type="similarity">
    <text evidence="3">Belongs to the plant Mediator complex subunit 15 family.</text>
</comment>
<protein>
    <recommendedName>
        <fullName>Probable mediator of RNA polymerase II transcription subunit 15c</fullName>
    </recommendedName>
</protein>
<evidence type="ECO:0000250" key="1"/>
<evidence type="ECO:0000256" key="2">
    <source>
        <dbReference type="SAM" id="MobiDB-lite"/>
    </source>
</evidence>
<evidence type="ECO:0000305" key="3"/>
<feature type="chain" id="PRO_0000418350" description="Probable mediator of RNA polymerase II transcription subunit 15c">
    <location>
        <begin position="1"/>
        <end position="935"/>
    </location>
</feature>
<feature type="region of interest" description="Disordered" evidence="2">
    <location>
        <begin position="1"/>
        <end position="28"/>
    </location>
</feature>
<feature type="region of interest" description="Disordered" evidence="2">
    <location>
        <begin position="170"/>
        <end position="190"/>
    </location>
</feature>
<feature type="region of interest" description="Disordered" evidence="2">
    <location>
        <begin position="495"/>
        <end position="526"/>
    </location>
</feature>
<feature type="region of interest" description="Disordered" evidence="2">
    <location>
        <begin position="548"/>
        <end position="611"/>
    </location>
</feature>
<feature type="region of interest" description="Disordered" evidence="2">
    <location>
        <begin position="635"/>
        <end position="654"/>
    </location>
</feature>
<feature type="compositionally biased region" description="Polar residues" evidence="2">
    <location>
        <begin position="1"/>
        <end position="13"/>
    </location>
</feature>
<feature type="compositionally biased region" description="Low complexity" evidence="2">
    <location>
        <begin position="511"/>
        <end position="526"/>
    </location>
</feature>
<feature type="compositionally biased region" description="Polar residues" evidence="2">
    <location>
        <begin position="548"/>
        <end position="577"/>
    </location>
</feature>
<feature type="compositionally biased region" description="Polar residues" evidence="2">
    <location>
        <begin position="635"/>
        <end position="644"/>
    </location>
</feature>
<feature type="splice variant" id="VSP_044029" description="In isoform 2." evidence="3">
    <original>I</original>
    <variation>IVCSLNDYRK</variation>
    <location>
        <position position="41"/>
    </location>
</feature>
<feature type="splice variant" id="VSP_044030" description="In isoform 2." evidence="3">
    <original>K</original>
    <variation>KNDYLRKLSETLHYIQRTYTRVLASQVVVNQAQSLPALLPYMQ</variation>
    <location>
        <position position="75"/>
    </location>
</feature>
<feature type="splice variant" id="VSP_044031" description="In isoform 2." evidence="3">
    <original>EQKRQEQEQLINQLTNLPTSRPNNRDQQGAFQVSSSQQNNNVTLHAMSQQKNNLQSMTRGQQVGQSQPMMSQQYRQQYPMQQDPQNRNLQKHLDFVQNNTNQFQAASSLRQTQNITDQQNQPQQLERANPSI</original>
    <variation>V</variation>
    <location>
        <begin position="155"/>
        <end position="286"/>
    </location>
</feature>
<feature type="splice variant" id="VSP_044032" description="In isoform 2." evidence="3">
    <location>
        <begin position="827"/>
        <end position="836"/>
    </location>
</feature>
<reference key="1">
    <citation type="journal article" date="1999" name="Nature">
        <title>Sequence and analysis of chromosome 2 of the plant Arabidopsis thaliana.</title>
        <authorList>
            <person name="Lin X."/>
            <person name="Kaul S."/>
            <person name="Rounsley S.D."/>
            <person name="Shea T.P."/>
            <person name="Benito M.-I."/>
            <person name="Town C.D."/>
            <person name="Fujii C.Y."/>
            <person name="Mason T.M."/>
            <person name="Bowman C.L."/>
            <person name="Barnstead M.E."/>
            <person name="Feldblyum T.V."/>
            <person name="Buell C.R."/>
            <person name="Ketchum K.A."/>
            <person name="Lee J.J."/>
            <person name="Ronning C.M."/>
            <person name="Koo H.L."/>
            <person name="Moffat K.S."/>
            <person name="Cronin L.A."/>
            <person name="Shen M."/>
            <person name="Pai G."/>
            <person name="Van Aken S."/>
            <person name="Umayam L."/>
            <person name="Tallon L.J."/>
            <person name="Gill J.E."/>
            <person name="Adams M.D."/>
            <person name="Carrera A.J."/>
            <person name="Creasy T.H."/>
            <person name="Goodman H.M."/>
            <person name="Somerville C.R."/>
            <person name="Copenhaver G.P."/>
            <person name="Preuss D."/>
            <person name="Nierman W.C."/>
            <person name="White O."/>
            <person name="Eisen J.A."/>
            <person name="Salzberg S.L."/>
            <person name="Fraser C.M."/>
            <person name="Venter J.C."/>
        </authorList>
    </citation>
    <scope>NUCLEOTIDE SEQUENCE [LARGE SCALE GENOMIC DNA]</scope>
    <source>
        <strain>cv. Columbia</strain>
    </source>
</reference>
<reference key="2">
    <citation type="journal article" date="2017" name="Plant J.">
        <title>Araport11: a complete reannotation of the Arabidopsis thaliana reference genome.</title>
        <authorList>
            <person name="Cheng C.Y."/>
            <person name="Krishnakumar V."/>
            <person name="Chan A.P."/>
            <person name="Thibaud-Nissen F."/>
            <person name="Schobel S."/>
            <person name="Town C.D."/>
        </authorList>
    </citation>
    <scope>GENOME REANNOTATION</scope>
    <source>
        <strain>cv. Columbia</strain>
    </source>
</reference>
<reference key="3">
    <citation type="journal article" date="2011" name="Plant Physiol.">
        <title>The Mediator complex in plants: structure, phylogeny, and expression profiling of representative genes in a dicot (Arabidopsis) and a monocot (rice) during reproduction and abiotic stress.</title>
        <authorList>
            <person name="Mathur S."/>
            <person name="Vyas S."/>
            <person name="Kapoor S."/>
            <person name="Tyagi A.K."/>
        </authorList>
    </citation>
    <scope>IDENTIFICATION</scope>
    <scope>NOMENCLATURE</scope>
</reference>
<gene>
    <name type="primary">MED15C</name>
    <name type="synonym">MED15_3</name>
    <name type="ordered locus">At2g10440</name>
    <name type="ORF">F12P23.5</name>
</gene>
<dbReference type="EMBL" id="AC007264">
    <property type="protein sequence ID" value="AAD28655.1"/>
    <property type="molecule type" value="Genomic_DNA"/>
</dbReference>
<dbReference type="EMBL" id="CP002685">
    <property type="protein sequence ID" value="AEC06144.1"/>
    <property type="molecule type" value="Genomic_DNA"/>
</dbReference>
<dbReference type="EMBL" id="CP002685">
    <property type="protein sequence ID" value="AEC06145.1"/>
    <property type="molecule type" value="Genomic_DNA"/>
</dbReference>
<dbReference type="PIR" id="E84491">
    <property type="entry name" value="E84491"/>
</dbReference>
<dbReference type="RefSeq" id="NP_001154512.1">
    <molecule id="Q9SHV7-2"/>
    <property type="nucleotide sequence ID" value="NM_001161040.1"/>
</dbReference>
<dbReference type="RefSeq" id="NP_178842.1">
    <molecule id="Q9SHV7-1"/>
    <property type="nucleotide sequence ID" value="NM_126801.1"/>
</dbReference>
<dbReference type="SMR" id="Q9SHV7"/>
<dbReference type="STRING" id="3702.Q9SHV7"/>
<dbReference type="iPTMnet" id="Q9SHV7"/>
<dbReference type="PaxDb" id="3702-AT2G10440.1"/>
<dbReference type="EnsemblPlants" id="AT2G10440.1">
    <molecule id="Q9SHV7-1"/>
    <property type="protein sequence ID" value="AT2G10440.1"/>
    <property type="gene ID" value="AT2G10440"/>
</dbReference>
<dbReference type="EnsemblPlants" id="AT2G10440.2">
    <molecule id="Q9SHV7-2"/>
    <property type="protein sequence ID" value="AT2G10440.2"/>
    <property type="gene ID" value="AT2G10440"/>
</dbReference>
<dbReference type="GeneID" id="815503"/>
<dbReference type="Gramene" id="AT2G10440.1">
    <molecule id="Q9SHV7-1"/>
    <property type="protein sequence ID" value="AT2G10440.1"/>
    <property type="gene ID" value="AT2G10440"/>
</dbReference>
<dbReference type="Gramene" id="AT2G10440.2">
    <molecule id="Q9SHV7-2"/>
    <property type="protein sequence ID" value="AT2G10440.2"/>
    <property type="gene ID" value="AT2G10440"/>
</dbReference>
<dbReference type="KEGG" id="ath:AT2G10440"/>
<dbReference type="Araport" id="AT2G10440"/>
<dbReference type="TAIR" id="AT2G10440">
    <property type="gene designation" value="MED15_2"/>
</dbReference>
<dbReference type="eggNOG" id="ENOG502QQV3">
    <property type="taxonomic scope" value="Eukaryota"/>
</dbReference>
<dbReference type="HOGENOM" id="CLU_016518_1_0_1"/>
<dbReference type="InParanoid" id="Q9SHV7"/>
<dbReference type="OMA" id="NNIACAG"/>
<dbReference type="PhylomeDB" id="Q9SHV7"/>
<dbReference type="PRO" id="PR:Q9SHV7"/>
<dbReference type="Proteomes" id="UP000006548">
    <property type="component" value="Chromosome 2"/>
</dbReference>
<dbReference type="ExpressionAtlas" id="Q9SHV7">
    <property type="expression patterns" value="baseline and differential"/>
</dbReference>
<dbReference type="GO" id="GO:0005634">
    <property type="term" value="C:nucleus"/>
    <property type="evidence" value="ECO:0007669"/>
    <property type="project" value="UniProtKB-SubCell"/>
</dbReference>
<dbReference type="GO" id="GO:0031490">
    <property type="term" value="F:chromatin DNA binding"/>
    <property type="evidence" value="ECO:0000314"/>
    <property type="project" value="TAIR"/>
</dbReference>
<dbReference type="GO" id="GO:0003713">
    <property type="term" value="F:transcription coactivator activity"/>
    <property type="evidence" value="ECO:0007669"/>
    <property type="project" value="InterPro"/>
</dbReference>
<dbReference type="InterPro" id="IPR036546">
    <property type="entry name" value="MED15_KIX"/>
</dbReference>
<dbReference type="InterPro" id="IPR044661">
    <property type="entry name" value="MED15a/b/c-like"/>
</dbReference>
<dbReference type="PANTHER" id="PTHR33137">
    <property type="entry name" value="MEDIATOR OF RNA POLYMERASE II TRANSCRIPTION SUBUNIT 15A-RELATED"/>
    <property type="match status" value="1"/>
</dbReference>
<dbReference type="PANTHER" id="PTHR33137:SF16">
    <property type="entry name" value="MEDIATOR OF RNA POLYMERASE II TRANSCRIPTION SUBUNIT 15C-RELATED"/>
    <property type="match status" value="1"/>
</dbReference>
<dbReference type="Pfam" id="PF16987">
    <property type="entry name" value="KIX_2"/>
    <property type="match status" value="1"/>
</dbReference>
<accession>Q9SHV7</accession>
<accession>F4IQE4</accession>
<keyword id="KW-0025">Alternative splicing</keyword>
<keyword id="KW-0539">Nucleus</keyword>
<keyword id="KW-1185">Reference proteome</keyword>
<keyword id="KW-0804">Transcription</keyword>
<keyword id="KW-0805">Transcription regulation</keyword>